<reference key="1">
    <citation type="journal article" date="2000" name="Microbiology">
        <title>Prochlorococcus marinus strain PCC 9511, a picoplanktonic cyanobacterium, synthesizes the smallest urease.</title>
        <authorList>
            <person name="Palinska K.A."/>
            <person name="Jahns T."/>
            <person name="Rippka R."/>
            <person name="Tandeau de Marsac N."/>
        </authorList>
    </citation>
    <scope>NUCLEOTIDE SEQUENCE [GENOMIC DNA]</scope>
</reference>
<keyword id="KW-0143">Chaperone</keyword>
<keyword id="KW-0963">Cytoplasm</keyword>
<keyword id="KW-0996">Nickel insertion</keyword>
<organism>
    <name type="scientific">Prochlorococcus marinus subsp. pastoris (strain PCC 9511)</name>
    <dbReference type="NCBI Taxonomy" id="100363"/>
    <lineage>
        <taxon>Bacteria</taxon>
        <taxon>Bacillati</taxon>
        <taxon>Cyanobacteriota</taxon>
        <taxon>Cyanophyceae</taxon>
        <taxon>Synechococcales</taxon>
        <taxon>Prochlorococcaceae</taxon>
        <taxon>Prochlorococcus</taxon>
    </lineage>
</organism>
<name>UREF_PROS9</name>
<sequence length="228" mass="26682">MKKNHLVKYLLISPSLPVGGFCYSEGLESYLKIKNLEEPDHIRNLITNELKIGQIRIEAKCLIEFFDIFVELKIANNINKNRRRLLSLDKWLLSFRDTVEIRDQQTQMAKSLFELTKEFGFEYLYEKNKNISWSLAWSWACFSFQINKLEMIENFIYAWTANQLSAAIRLIPMGSIKAQTIQLELLDLISEVSQEIVDSNINDLYVGNISLSMAQQNHNDLYTKLFRN</sequence>
<proteinExistence type="inferred from homology"/>
<protein>
    <recommendedName>
        <fullName evidence="1">Urease accessory protein UreF</fullName>
    </recommendedName>
</protein>
<evidence type="ECO:0000255" key="1">
    <source>
        <dbReference type="HAMAP-Rule" id="MF_01385"/>
    </source>
</evidence>
<accession>Q9L639</accession>
<feature type="chain" id="PRO_0000344145" description="Urease accessory protein UreF">
    <location>
        <begin position="1"/>
        <end position="228"/>
    </location>
</feature>
<dbReference type="EMBL" id="AF242489">
    <property type="protein sequence ID" value="AAF70253.1"/>
    <property type="molecule type" value="Genomic_DNA"/>
</dbReference>
<dbReference type="SMR" id="Q9L639"/>
<dbReference type="GO" id="GO:0005737">
    <property type="term" value="C:cytoplasm"/>
    <property type="evidence" value="ECO:0007669"/>
    <property type="project" value="UniProtKB-SubCell"/>
</dbReference>
<dbReference type="GO" id="GO:0016151">
    <property type="term" value="F:nickel cation binding"/>
    <property type="evidence" value="ECO:0007669"/>
    <property type="project" value="UniProtKB-UniRule"/>
</dbReference>
<dbReference type="Gene3D" id="1.10.4190.10">
    <property type="entry name" value="Urease accessory protein UreF"/>
    <property type="match status" value="1"/>
</dbReference>
<dbReference type="HAMAP" id="MF_01385">
    <property type="entry name" value="UreF"/>
    <property type="match status" value="1"/>
</dbReference>
<dbReference type="InterPro" id="IPR002639">
    <property type="entry name" value="UreF"/>
</dbReference>
<dbReference type="InterPro" id="IPR038277">
    <property type="entry name" value="UreF_sf"/>
</dbReference>
<dbReference type="PANTHER" id="PTHR33620">
    <property type="entry name" value="UREASE ACCESSORY PROTEIN F"/>
    <property type="match status" value="1"/>
</dbReference>
<dbReference type="PANTHER" id="PTHR33620:SF1">
    <property type="entry name" value="UREASE ACCESSORY PROTEIN F"/>
    <property type="match status" value="1"/>
</dbReference>
<dbReference type="Pfam" id="PF01730">
    <property type="entry name" value="UreF"/>
    <property type="match status" value="1"/>
</dbReference>
<dbReference type="PIRSF" id="PIRSF009467">
    <property type="entry name" value="Ureas_acces_UreF"/>
    <property type="match status" value="1"/>
</dbReference>
<comment type="function">
    <text evidence="1">Required for maturation of urease via the functional incorporation of the urease nickel metallocenter.</text>
</comment>
<comment type="subunit">
    <text evidence="1">UreD, UreF and UreG form a complex that acts as a GTP-hydrolysis-dependent molecular chaperone, activating the urease apoprotein by helping to assemble the nickel containing metallocenter of UreC. The UreE protein probably delivers the nickel.</text>
</comment>
<comment type="subcellular location">
    <subcellularLocation>
        <location evidence="1">Cytoplasm</location>
    </subcellularLocation>
</comment>
<comment type="similarity">
    <text evidence="1">Belongs to the UreF family.</text>
</comment>
<gene>
    <name evidence="1" type="primary">ureF</name>
</gene>